<evidence type="ECO:0000255" key="1">
    <source>
        <dbReference type="PROSITE-ProRule" id="PRU00608"/>
    </source>
</evidence>
<evidence type="ECO:0000305" key="2"/>
<sequence length="171" mass="18632">MTKKVAIILANEFEDIEYSSPKEALENAGFNTVVIGDTANSEVVGKHGEKVTVDVGIAEAKPEDYDALLIPGGFSPDHLRGDTEGRYGTFAKYFTKNDVPTFAICHGPQILIDTDDLKGRTLTAVLNVRKDLSNAGAHVVDESVVVDNNIVTSRVPDDLDDFNREIVKQLQ</sequence>
<comment type="similarity">
    <text evidence="2">Belongs to the peptidase C56 family.</text>
</comment>
<protein>
    <recommendedName>
        <fullName>Uncharacterized protein SACOL1933</fullName>
    </recommendedName>
</protein>
<dbReference type="EMBL" id="CP000046">
    <property type="protein sequence ID" value="AAW38374.1"/>
    <property type="molecule type" value="Genomic_DNA"/>
</dbReference>
<dbReference type="RefSeq" id="WP_000163283.1">
    <property type="nucleotide sequence ID" value="NZ_JBGOFO010000006.1"/>
</dbReference>
<dbReference type="SMR" id="Q5HEP9"/>
<dbReference type="MEROPS" id="C56.001"/>
<dbReference type="KEGG" id="sac:SACOL1933"/>
<dbReference type="HOGENOM" id="CLU_000445_44_4_9"/>
<dbReference type="Proteomes" id="UP000000530">
    <property type="component" value="Chromosome"/>
</dbReference>
<dbReference type="CDD" id="cd03134">
    <property type="entry name" value="GATase1_PfpI_like"/>
    <property type="match status" value="1"/>
</dbReference>
<dbReference type="Gene3D" id="3.40.50.880">
    <property type="match status" value="1"/>
</dbReference>
<dbReference type="InterPro" id="IPR006286">
    <property type="entry name" value="C56_PfpI-like"/>
</dbReference>
<dbReference type="InterPro" id="IPR029062">
    <property type="entry name" value="Class_I_gatase-like"/>
</dbReference>
<dbReference type="InterPro" id="IPR002818">
    <property type="entry name" value="DJ-1/PfpI"/>
</dbReference>
<dbReference type="NCBIfam" id="TIGR01382">
    <property type="entry name" value="PfpI"/>
    <property type="match status" value="1"/>
</dbReference>
<dbReference type="PANTHER" id="PTHR42733">
    <property type="entry name" value="DJ-1 PROTEIN"/>
    <property type="match status" value="1"/>
</dbReference>
<dbReference type="PANTHER" id="PTHR42733:SF2">
    <property type="entry name" value="DJ-1_THIJ_PFPI FAMILY PROTEIN"/>
    <property type="match status" value="1"/>
</dbReference>
<dbReference type="Pfam" id="PF01965">
    <property type="entry name" value="DJ-1_PfpI"/>
    <property type="match status" value="1"/>
</dbReference>
<dbReference type="SUPFAM" id="SSF52317">
    <property type="entry name" value="Class I glutamine amidotransferase-like"/>
    <property type="match status" value="1"/>
</dbReference>
<dbReference type="PROSITE" id="PS51276">
    <property type="entry name" value="PEPTIDASE_C56_PFPI"/>
    <property type="match status" value="1"/>
</dbReference>
<gene>
    <name type="ordered locus">SACOL1933</name>
</gene>
<organism>
    <name type="scientific">Staphylococcus aureus (strain COL)</name>
    <dbReference type="NCBI Taxonomy" id="93062"/>
    <lineage>
        <taxon>Bacteria</taxon>
        <taxon>Bacillati</taxon>
        <taxon>Bacillota</taxon>
        <taxon>Bacilli</taxon>
        <taxon>Bacillales</taxon>
        <taxon>Staphylococcaceae</taxon>
        <taxon>Staphylococcus</taxon>
    </lineage>
</organism>
<feature type="chain" id="PRO_0000157835" description="Uncharacterized protein SACOL1933">
    <location>
        <begin position="1"/>
        <end position="171"/>
    </location>
</feature>
<feature type="domain" description="PfpI endopeptidase" evidence="1">
    <location>
        <begin position="3"/>
        <end position="171"/>
    </location>
</feature>
<reference key="1">
    <citation type="journal article" date="2005" name="J. Bacteriol.">
        <title>Insights on evolution of virulence and resistance from the complete genome analysis of an early methicillin-resistant Staphylococcus aureus strain and a biofilm-producing methicillin-resistant Staphylococcus epidermidis strain.</title>
        <authorList>
            <person name="Gill S.R."/>
            <person name="Fouts D.E."/>
            <person name="Archer G.L."/>
            <person name="Mongodin E.F."/>
            <person name="DeBoy R.T."/>
            <person name="Ravel J."/>
            <person name="Paulsen I.T."/>
            <person name="Kolonay J.F."/>
            <person name="Brinkac L.M."/>
            <person name="Beanan M.J."/>
            <person name="Dodson R.J."/>
            <person name="Daugherty S.C."/>
            <person name="Madupu R."/>
            <person name="Angiuoli S.V."/>
            <person name="Durkin A.S."/>
            <person name="Haft D.H."/>
            <person name="Vamathevan J.J."/>
            <person name="Khouri H."/>
            <person name="Utterback T.R."/>
            <person name="Lee C."/>
            <person name="Dimitrov G."/>
            <person name="Jiang L."/>
            <person name="Qin H."/>
            <person name="Weidman J."/>
            <person name="Tran K."/>
            <person name="Kang K.H."/>
            <person name="Hance I.R."/>
            <person name="Nelson K.E."/>
            <person name="Fraser C.M."/>
        </authorList>
    </citation>
    <scope>NUCLEOTIDE SEQUENCE [LARGE SCALE GENOMIC DNA]</scope>
    <source>
        <strain>COL</strain>
    </source>
</reference>
<accession>Q5HEP9</accession>
<name>Y1933_STAAC</name>
<proteinExistence type="inferred from homology"/>